<name>LHG_BLAVI</name>
<proteinExistence type="evidence at protein level"/>
<comment type="function">
    <text>One of the components of the bacteriochlorophyll-protein complex in the chromatophore membrane.</text>
</comment>
<protein>
    <recommendedName>
        <fullName>Light-harvesting protein B-1015 gamma chain</fullName>
    </recommendedName>
</protein>
<organism>
    <name type="scientific">Blastochloris viridis</name>
    <name type="common">Rhodopseudomonas viridis</name>
    <dbReference type="NCBI Taxonomy" id="1079"/>
    <lineage>
        <taxon>Bacteria</taxon>
        <taxon>Pseudomonadati</taxon>
        <taxon>Pseudomonadota</taxon>
        <taxon>Alphaproteobacteria</taxon>
        <taxon>Hyphomicrobiales</taxon>
        <taxon>Blastochloridaceae</taxon>
        <taxon>Blastochloris</taxon>
    </lineage>
</organism>
<sequence>YFAADGSVVPSISDWNLWVPLGILGIPTIWIALTYR</sequence>
<accession>P04126</accession>
<keyword id="KW-0002">3D-structure</keyword>
<keyword id="KW-0042">Antenna complex</keyword>
<keyword id="KW-0903">Direct protein sequencing</keyword>
<keyword id="KW-0437">Light-harvesting polypeptide</keyword>
<reference key="1">
    <citation type="journal article" date="1985" name="Biol. Chem. Hoppe-Seyler">
        <title>The light-harvesting polypeptides of Rhodopseudomonas viridis. The complete amino-acid sequences of B1015-alpha, B1015-beta and B1015-gamma.</title>
        <authorList>
            <person name="Brunisholz R.A."/>
            <person name="Jay F."/>
            <person name="Suter F."/>
            <person name="Zuber H."/>
        </authorList>
    </citation>
    <scope>PROTEIN SEQUENCE</scope>
</reference>
<dbReference type="PIR" id="A03455">
    <property type="entry name" value="LBRFGV"/>
</dbReference>
<dbReference type="PDB" id="6ET5">
    <property type="method" value="EM"/>
    <property type="resolution" value="3.00 A"/>
    <property type="chains" value="2/5/I/O/R/U/X/a/d/g/j/m/p/s/v/y=13-36"/>
</dbReference>
<dbReference type="PDBsum" id="6ET5"/>
<dbReference type="EMDB" id="EMD-3951"/>
<dbReference type="SMR" id="P04126"/>
<dbReference type="IntAct" id="P04126">
    <property type="interactions" value="1"/>
</dbReference>
<dbReference type="STRING" id="1079.BVIR_1786"/>
<dbReference type="GO" id="GO:0030076">
    <property type="term" value="C:light-harvesting complex"/>
    <property type="evidence" value="ECO:0007669"/>
    <property type="project" value="UniProtKB-KW"/>
</dbReference>
<feature type="chain" id="PRO_0000099841" description="Light-harvesting protein B-1015 gamma chain">
    <location>
        <begin position="1"/>
        <end position="36"/>
    </location>
</feature>
<feature type="sequence variant" description="In 33% of the molecules.">
    <original>T</original>
    <variation>V</variation>
    <location>
        <position position="34"/>
    </location>
</feature>
<feature type="helix" evidence="1">
    <location>
        <begin position="19"/>
        <end position="34"/>
    </location>
</feature>
<evidence type="ECO:0007829" key="1">
    <source>
        <dbReference type="PDB" id="6ET5"/>
    </source>
</evidence>